<gene>
    <name type="ORF">SPAC9.07c</name>
</gene>
<name>YFY7_SCHPO</name>
<evidence type="ECO:0000255" key="1">
    <source>
        <dbReference type="PROSITE-ProRule" id="PRU01047"/>
    </source>
</evidence>
<evidence type="ECO:0000255" key="2">
    <source>
        <dbReference type="PROSITE-ProRule" id="PRU01228"/>
    </source>
</evidence>
<evidence type="ECO:0000305" key="3"/>
<reference key="1">
    <citation type="journal article" date="1997" name="DNA Res.">
        <title>Identification of open reading frames in Schizosaccharomyces pombe cDNAs.</title>
        <authorList>
            <person name="Yoshioka S."/>
            <person name="Kato K."/>
            <person name="Nakai K."/>
            <person name="Okayama H."/>
            <person name="Nojima H."/>
        </authorList>
    </citation>
    <scope>NUCLEOTIDE SEQUENCE [LARGE SCALE MRNA]</scope>
    <source>
        <strain>PR745</strain>
    </source>
</reference>
<reference key="2">
    <citation type="journal article" date="2002" name="Nature">
        <title>The genome sequence of Schizosaccharomyces pombe.</title>
        <authorList>
            <person name="Wood V."/>
            <person name="Gwilliam R."/>
            <person name="Rajandream M.A."/>
            <person name="Lyne M.H."/>
            <person name="Lyne R."/>
            <person name="Stewart A."/>
            <person name="Sgouros J.G."/>
            <person name="Peat N."/>
            <person name="Hayles J."/>
            <person name="Baker S.G."/>
            <person name="Basham D."/>
            <person name="Bowman S."/>
            <person name="Brooks K."/>
            <person name="Brown D."/>
            <person name="Brown S."/>
            <person name="Chillingworth T."/>
            <person name="Churcher C.M."/>
            <person name="Collins M."/>
            <person name="Connor R."/>
            <person name="Cronin A."/>
            <person name="Davis P."/>
            <person name="Feltwell T."/>
            <person name="Fraser A."/>
            <person name="Gentles S."/>
            <person name="Goble A."/>
            <person name="Hamlin N."/>
            <person name="Harris D.E."/>
            <person name="Hidalgo J."/>
            <person name="Hodgson G."/>
            <person name="Holroyd S."/>
            <person name="Hornsby T."/>
            <person name="Howarth S."/>
            <person name="Huckle E.J."/>
            <person name="Hunt S."/>
            <person name="Jagels K."/>
            <person name="James K.D."/>
            <person name="Jones L."/>
            <person name="Jones M."/>
            <person name="Leather S."/>
            <person name="McDonald S."/>
            <person name="McLean J."/>
            <person name="Mooney P."/>
            <person name="Moule S."/>
            <person name="Mungall K.L."/>
            <person name="Murphy L.D."/>
            <person name="Niblett D."/>
            <person name="Odell C."/>
            <person name="Oliver K."/>
            <person name="O'Neil S."/>
            <person name="Pearson D."/>
            <person name="Quail M.A."/>
            <person name="Rabbinowitsch E."/>
            <person name="Rutherford K.M."/>
            <person name="Rutter S."/>
            <person name="Saunders D."/>
            <person name="Seeger K."/>
            <person name="Sharp S."/>
            <person name="Skelton J."/>
            <person name="Simmonds M.N."/>
            <person name="Squares R."/>
            <person name="Squares S."/>
            <person name="Stevens K."/>
            <person name="Taylor K."/>
            <person name="Taylor R.G."/>
            <person name="Tivey A."/>
            <person name="Walsh S.V."/>
            <person name="Warren T."/>
            <person name="Whitehead S."/>
            <person name="Woodward J.R."/>
            <person name="Volckaert G."/>
            <person name="Aert R."/>
            <person name="Robben J."/>
            <person name="Grymonprez B."/>
            <person name="Weltjens I."/>
            <person name="Vanstreels E."/>
            <person name="Rieger M."/>
            <person name="Schaefer M."/>
            <person name="Mueller-Auer S."/>
            <person name="Gabel C."/>
            <person name="Fuchs M."/>
            <person name="Duesterhoeft A."/>
            <person name="Fritzc C."/>
            <person name="Holzer E."/>
            <person name="Moestl D."/>
            <person name="Hilbert H."/>
            <person name="Borzym K."/>
            <person name="Langer I."/>
            <person name="Beck A."/>
            <person name="Lehrach H."/>
            <person name="Reinhardt R."/>
            <person name="Pohl T.M."/>
            <person name="Eger P."/>
            <person name="Zimmermann W."/>
            <person name="Wedler H."/>
            <person name="Wambutt R."/>
            <person name="Purnelle B."/>
            <person name="Goffeau A."/>
            <person name="Cadieu E."/>
            <person name="Dreano S."/>
            <person name="Gloux S."/>
            <person name="Lelaure V."/>
            <person name="Mottier S."/>
            <person name="Galibert F."/>
            <person name="Aves S.J."/>
            <person name="Xiang Z."/>
            <person name="Hunt C."/>
            <person name="Moore K."/>
            <person name="Hurst S.M."/>
            <person name="Lucas M."/>
            <person name="Rochet M."/>
            <person name="Gaillardin C."/>
            <person name="Tallada V.A."/>
            <person name="Garzon A."/>
            <person name="Thode G."/>
            <person name="Daga R.R."/>
            <person name="Cruzado L."/>
            <person name="Jimenez J."/>
            <person name="Sanchez M."/>
            <person name="del Rey F."/>
            <person name="Benito J."/>
            <person name="Dominguez A."/>
            <person name="Revuelta J.L."/>
            <person name="Moreno S."/>
            <person name="Armstrong J."/>
            <person name="Forsburg S.L."/>
            <person name="Cerutti L."/>
            <person name="Lowe T."/>
            <person name="McCombie W.R."/>
            <person name="Paulsen I."/>
            <person name="Potashkin J."/>
            <person name="Shpakovski G.V."/>
            <person name="Ussery D."/>
            <person name="Barrell B.G."/>
            <person name="Nurse P."/>
        </authorList>
    </citation>
    <scope>NUCLEOTIDE SEQUENCE [LARGE SCALE GENOMIC DNA]</scope>
    <source>
        <strain>972 / ATCC 24843</strain>
    </source>
</reference>
<organism>
    <name type="scientific">Schizosaccharomyces pombe (strain 972 / ATCC 24843)</name>
    <name type="common">Fission yeast</name>
    <dbReference type="NCBI Taxonomy" id="284812"/>
    <lineage>
        <taxon>Eukaryota</taxon>
        <taxon>Fungi</taxon>
        <taxon>Dikarya</taxon>
        <taxon>Ascomycota</taxon>
        <taxon>Taphrinomycotina</taxon>
        <taxon>Schizosaccharomycetes</taxon>
        <taxon>Schizosaccharomycetales</taxon>
        <taxon>Schizosaccharomycetaceae</taxon>
        <taxon>Schizosaccharomyces</taxon>
    </lineage>
</organism>
<accession>Q9UT21</accession>
<accession>P78786</accession>
<dbReference type="EMBL" id="D89135">
    <property type="protein sequence ID" value="BAA13797.1"/>
    <property type="molecule type" value="mRNA"/>
</dbReference>
<dbReference type="EMBL" id="CU329670">
    <property type="protein sequence ID" value="CAB57425.1"/>
    <property type="molecule type" value="Genomic_DNA"/>
</dbReference>
<dbReference type="PIR" id="T39192">
    <property type="entry name" value="T39192"/>
</dbReference>
<dbReference type="PIR" id="T42381">
    <property type="entry name" value="T42381"/>
</dbReference>
<dbReference type="RefSeq" id="NP_593350.1">
    <property type="nucleotide sequence ID" value="NM_001018782.2"/>
</dbReference>
<dbReference type="SMR" id="Q9UT21"/>
<dbReference type="BioGRID" id="280076">
    <property type="interactions" value="51"/>
</dbReference>
<dbReference type="FunCoup" id="Q9UT21">
    <property type="interactions" value="1197"/>
</dbReference>
<dbReference type="STRING" id="284812.Q9UT21"/>
<dbReference type="iPTMnet" id="Q9UT21"/>
<dbReference type="PaxDb" id="4896-SPAC9.07c.1"/>
<dbReference type="EnsemblFungi" id="SPAC9.07c.1">
    <property type="protein sequence ID" value="SPAC9.07c.1:pep"/>
    <property type="gene ID" value="SPAC9.07c"/>
</dbReference>
<dbReference type="KEGG" id="spo:2543662"/>
<dbReference type="PomBase" id="SPAC9.07c"/>
<dbReference type="VEuPathDB" id="FungiDB:SPAC9.07c"/>
<dbReference type="eggNOG" id="KOG1487">
    <property type="taxonomic scope" value="Eukaryota"/>
</dbReference>
<dbReference type="HOGENOM" id="CLU_044997_0_0_1"/>
<dbReference type="InParanoid" id="Q9UT21"/>
<dbReference type="OMA" id="SAKHPGQ"/>
<dbReference type="PhylomeDB" id="Q9UT21"/>
<dbReference type="PRO" id="PR:Q9UT21"/>
<dbReference type="Proteomes" id="UP000002485">
    <property type="component" value="Chromosome I"/>
</dbReference>
<dbReference type="GO" id="GO:0005737">
    <property type="term" value="C:cytoplasm"/>
    <property type="evidence" value="ECO:0000318"/>
    <property type="project" value="GO_Central"/>
</dbReference>
<dbReference type="GO" id="GO:0005829">
    <property type="term" value="C:cytosol"/>
    <property type="evidence" value="ECO:0007005"/>
    <property type="project" value="PomBase"/>
</dbReference>
<dbReference type="GO" id="GO:0005634">
    <property type="term" value="C:nucleus"/>
    <property type="evidence" value="ECO:0007005"/>
    <property type="project" value="PomBase"/>
</dbReference>
<dbReference type="GO" id="GO:0005525">
    <property type="term" value="F:GTP binding"/>
    <property type="evidence" value="ECO:0000318"/>
    <property type="project" value="GO_Central"/>
</dbReference>
<dbReference type="GO" id="GO:0003924">
    <property type="term" value="F:GTPase activity"/>
    <property type="evidence" value="ECO:0000266"/>
    <property type="project" value="PomBase"/>
</dbReference>
<dbReference type="GO" id="GO:0002181">
    <property type="term" value="P:cytoplasmic translation"/>
    <property type="evidence" value="ECO:0000318"/>
    <property type="project" value="GO_Central"/>
</dbReference>
<dbReference type="CDD" id="cd01896">
    <property type="entry name" value="DRG"/>
    <property type="match status" value="1"/>
</dbReference>
<dbReference type="CDD" id="cd17230">
    <property type="entry name" value="TGS_DRG1"/>
    <property type="match status" value="1"/>
</dbReference>
<dbReference type="FunFam" id="3.10.20.30:FF:000003">
    <property type="entry name" value="Developmentally-regulated GTP-binding protein 1"/>
    <property type="match status" value="1"/>
</dbReference>
<dbReference type="FunFam" id="3.40.50.300:FF:000740">
    <property type="entry name" value="Putative GTP-binding protein 1"/>
    <property type="match status" value="1"/>
</dbReference>
<dbReference type="Gene3D" id="3.10.20.30">
    <property type="match status" value="1"/>
</dbReference>
<dbReference type="Gene3D" id="6.10.140.1070">
    <property type="match status" value="2"/>
</dbReference>
<dbReference type="InterPro" id="IPR012675">
    <property type="entry name" value="Beta-grasp_dom_sf"/>
</dbReference>
<dbReference type="InterPro" id="IPR045001">
    <property type="entry name" value="DRG"/>
</dbReference>
<dbReference type="InterPro" id="IPR031167">
    <property type="entry name" value="G_OBG"/>
</dbReference>
<dbReference type="InterPro" id="IPR006073">
    <property type="entry name" value="GTP-bd"/>
</dbReference>
<dbReference type="InterPro" id="IPR031662">
    <property type="entry name" value="GTP-binding_2"/>
</dbReference>
<dbReference type="InterPro" id="IPR006074">
    <property type="entry name" value="GTP1-OBG_CS"/>
</dbReference>
<dbReference type="InterPro" id="IPR027417">
    <property type="entry name" value="P-loop_NTPase"/>
</dbReference>
<dbReference type="InterPro" id="IPR005225">
    <property type="entry name" value="Small_GTP-bd"/>
</dbReference>
<dbReference type="InterPro" id="IPR004095">
    <property type="entry name" value="TGS"/>
</dbReference>
<dbReference type="InterPro" id="IPR012676">
    <property type="entry name" value="TGS-like"/>
</dbReference>
<dbReference type="NCBIfam" id="TIGR00231">
    <property type="entry name" value="small_GTP"/>
    <property type="match status" value="1"/>
</dbReference>
<dbReference type="PANTHER" id="PTHR43127">
    <property type="entry name" value="DEVELOPMENTALLY-REGULATED GTP-BINDING PROTEIN 2"/>
    <property type="match status" value="1"/>
</dbReference>
<dbReference type="Pfam" id="PF01926">
    <property type="entry name" value="MMR_HSR1"/>
    <property type="match status" value="1"/>
</dbReference>
<dbReference type="Pfam" id="PF16897">
    <property type="entry name" value="MMR_HSR1_Xtn"/>
    <property type="match status" value="1"/>
</dbReference>
<dbReference type="Pfam" id="PF02824">
    <property type="entry name" value="TGS"/>
    <property type="match status" value="1"/>
</dbReference>
<dbReference type="PRINTS" id="PR00326">
    <property type="entry name" value="GTP1OBG"/>
</dbReference>
<dbReference type="SUPFAM" id="SSF52540">
    <property type="entry name" value="P-loop containing nucleoside triphosphate hydrolases"/>
    <property type="match status" value="1"/>
</dbReference>
<dbReference type="SUPFAM" id="SSF81271">
    <property type="entry name" value="TGS-like"/>
    <property type="match status" value="1"/>
</dbReference>
<dbReference type="PROSITE" id="PS51710">
    <property type="entry name" value="G_OBG"/>
    <property type="match status" value="1"/>
</dbReference>
<dbReference type="PROSITE" id="PS00905">
    <property type="entry name" value="GTP1_OBG"/>
    <property type="match status" value="1"/>
</dbReference>
<dbReference type="PROSITE" id="PS51880">
    <property type="entry name" value="TGS"/>
    <property type="match status" value="1"/>
</dbReference>
<sequence>MATTAQKIKEVEDEMAKTQKNKATAKHLGMLKAKLAKLKRELITPTGGGGGGGLGFDVARTGIGTVGFIGFPSVGKSTLMTQLTGTRSEAAAYEFTTLTTVPGVLQYNGAKIQILDLPGIIEGAKDGRGRGKQVITVARTCNLIFIVLDVLKPMSHKRIIEEELEGFGIRLNKEPPNIVFKKKERGGINITNTVPLTHIDLDEIRAVCSEYRVNSADIAFRCDATIDDLIDVLEGNRVYIPALYVLNKIDSISIEELDLIDRIPNAVPICGNRGWNIDELKETMWDYLNLVRVYTRPRGLEPDYSEPVILRTGHSTVEDFCNNIHSSIKSQFKHAYVWGKSVPYPGMRVGLSHVLLDEDVVTIVKK</sequence>
<keyword id="KW-0342">GTP-binding</keyword>
<keyword id="KW-0547">Nucleotide-binding</keyword>
<keyword id="KW-1185">Reference proteome</keyword>
<proteinExistence type="evidence at transcript level"/>
<feature type="chain" id="PRO_0000205448" description="Uncharacterized GTP-binding protein C9.07c">
    <location>
        <begin position="1"/>
        <end position="366"/>
    </location>
</feature>
<feature type="domain" description="OBG-type G" evidence="1">
    <location>
        <begin position="64"/>
        <end position="289"/>
    </location>
</feature>
<feature type="domain" description="TGS" evidence="2">
    <location>
        <begin position="289"/>
        <end position="365"/>
    </location>
</feature>
<feature type="binding site" evidence="1">
    <location>
        <begin position="70"/>
        <end position="77"/>
    </location>
    <ligand>
        <name>GTP</name>
        <dbReference type="ChEBI" id="CHEBI:37565"/>
    </ligand>
</feature>
<feature type="binding site" evidence="1">
    <location>
        <begin position="116"/>
        <end position="120"/>
    </location>
    <ligand>
        <name>GTP</name>
        <dbReference type="ChEBI" id="CHEBI:37565"/>
    </ligand>
</feature>
<feature type="binding site" evidence="1">
    <location>
        <begin position="247"/>
        <end position="250"/>
    </location>
    <ligand>
        <name>GTP</name>
        <dbReference type="ChEBI" id="CHEBI:37565"/>
    </ligand>
</feature>
<feature type="sequence conflict" description="In Ref. 1; BAA13797." evidence="3" ref="1">
    <original>A</original>
    <variation>S</variation>
    <location>
        <position position="224"/>
    </location>
</feature>
<protein>
    <recommendedName>
        <fullName>Uncharacterized GTP-binding protein C9.07c</fullName>
    </recommendedName>
</protein>
<comment type="similarity">
    <text evidence="1">Belongs to the TRAFAC class OBG-HflX-like GTPase superfamily. OBG GTPase family.</text>
</comment>